<gene>
    <name evidence="1" type="primary">astB</name>
    <name type="ordered locus">Maqu_3315</name>
</gene>
<keyword id="KW-0056">Arginine metabolism</keyword>
<keyword id="KW-0378">Hydrolase</keyword>
<accession>A1U5W7</accession>
<proteinExistence type="inferred from homology"/>
<organism>
    <name type="scientific">Marinobacter nauticus (strain ATCC 700491 / DSM 11845 / VT8)</name>
    <name type="common">Marinobacter aquaeolei</name>
    <dbReference type="NCBI Taxonomy" id="351348"/>
    <lineage>
        <taxon>Bacteria</taxon>
        <taxon>Pseudomonadati</taxon>
        <taxon>Pseudomonadota</taxon>
        <taxon>Gammaproteobacteria</taxon>
        <taxon>Pseudomonadales</taxon>
        <taxon>Marinobacteraceae</taxon>
        <taxon>Marinobacter</taxon>
    </lineage>
</organism>
<sequence length="446" mass="48399">MVKHAVEANFDGLVGPTHNYAGLSWGNVASKSNVNAVANPREAALQGLAKMKRLADRGYVQGILPPHERPHIPTLRALGFEGNERQILEAVAKADPTILAAVSSASCMWTANAATVSPSADTADHRVHFTPANLSAKFHRSIEHQVTGRSLKAIFGDESYFAHHPALPSVSHFGDEGAANHTRLCSRYGEPGVELFVYGQVAFNESAPAPGKYPARQTLEASRAIARLHGLTDRHAVFAQQNPAAIDAGVFHNDVIAVGNGNCLFYHEQAFLDEARVLADIQERLTGAELEAVRVSSTQVPIEDAVASYLFNSQLLNTADGMLLAVPGECREVASVSRYLDELVKADTPITAVEVFDVKQSMRNGGGPACLRLRVVLNDDELHAINRGVILTDALYERLTSWVEAHYRDQLSQQDLADPMLLEEVRKALDELTGILGLGSIYDFQL</sequence>
<name>ASTB_MARN8</name>
<protein>
    <recommendedName>
        <fullName evidence="1">N-succinylarginine dihydrolase</fullName>
        <ecNumber evidence="1">3.5.3.23</ecNumber>
    </recommendedName>
</protein>
<comment type="function">
    <text evidence="1">Catalyzes the hydrolysis of N(2)-succinylarginine into N(2)-succinylornithine, ammonia and CO(2).</text>
</comment>
<comment type="catalytic activity">
    <reaction evidence="1">
        <text>N(2)-succinyl-L-arginine + 2 H2O + 2 H(+) = N(2)-succinyl-L-ornithine + 2 NH4(+) + CO2</text>
        <dbReference type="Rhea" id="RHEA:19533"/>
        <dbReference type="ChEBI" id="CHEBI:15377"/>
        <dbReference type="ChEBI" id="CHEBI:15378"/>
        <dbReference type="ChEBI" id="CHEBI:16526"/>
        <dbReference type="ChEBI" id="CHEBI:28938"/>
        <dbReference type="ChEBI" id="CHEBI:58241"/>
        <dbReference type="ChEBI" id="CHEBI:58514"/>
        <dbReference type="EC" id="3.5.3.23"/>
    </reaction>
</comment>
<comment type="pathway">
    <text evidence="1">Amino-acid degradation; L-arginine degradation via AST pathway; L-glutamate and succinate from L-arginine: step 2/5.</text>
</comment>
<comment type="subunit">
    <text evidence="1">Homodimer.</text>
</comment>
<comment type="similarity">
    <text evidence="1">Belongs to the succinylarginine dihydrolase family.</text>
</comment>
<feature type="chain" id="PRO_1000213739" description="N-succinylarginine dihydrolase">
    <location>
        <begin position="1"/>
        <end position="446"/>
    </location>
</feature>
<feature type="active site" evidence="1">
    <location>
        <position position="176"/>
    </location>
</feature>
<feature type="active site" evidence="1">
    <location>
        <position position="252"/>
    </location>
</feature>
<feature type="active site" description="Nucleophile" evidence="1">
    <location>
        <position position="370"/>
    </location>
</feature>
<feature type="binding site" evidence="1">
    <location>
        <begin position="21"/>
        <end position="30"/>
    </location>
    <ligand>
        <name>substrate</name>
    </ligand>
</feature>
<feature type="binding site" evidence="1">
    <location>
        <position position="112"/>
    </location>
    <ligand>
        <name>substrate</name>
    </ligand>
</feature>
<feature type="binding site" evidence="1">
    <location>
        <begin position="139"/>
        <end position="140"/>
    </location>
    <ligand>
        <name>substrate</name>
    </ligand>
</feature>
<feature type="binding site" evidence="1">
    <location>
        <position position="216"/>
    </location>
    <ligand>
        <name>substrate</name>
    </ligand>
</feature>
<feature type="binding site" evidence="1">
    <location>
        <position position="254"/>
    </location>
    <ligand>
        <name>substrate</name>
    </ligand>
</feature>
<feature type="binding site" evidence="1">
    <location>
        <position position="364"/>
    </location>
    <ligand>
        <name>substrate</name>
    </ligand>
</feature>
<dbReference type="EC" id="3.5.3.23" evidence="1"/>
<dbReference type="EMBL" id="CP000514">
    <property type="protein sequence ID" value="ABM20386.1"/>
    <property type="molecule type" value="Genomic_DNA"/>
</dbReference>
<dbReference type="RefSeq" id="WP_011786727.1">
    <property type="nucleotide sequence ID" value="NC_008740.1"/>
</dbReference>
<dbReference type="SMR" id="A1U5W7"/>
<dbReference type="STRING" id="351348.Maqu_3315"/>
<dbReference type="KEGG" id="maq:Maqu_3315"/>
<dbReference type="eggNOG" id="COG3724">
    <property type="taxonomic scope" value="Bacteria"/>
</dbReference>
<dbReference type="HOGENOM" id="CLU_053835_0_0_6"/>
<dbReference type="OrthoDB" id="248552at2"/>
<dbReference type="UniPathway" id="UPA00185">
    <property type="reaction ID" value="UER00280"/>
</dbReference>
<dbReference type="Proteomes" id="UP000000998">
    <property type="component" value="Chromosome"/>
</dbReference>
<dbReference type="GO" id="GO:0009015">
    <property type="term" value="F:N-succinylarginine dihydrolase activity"/>
    <property type="evidence" value="ECO:0007669"/>
    <property type="project" value="UniProtKB-UniRule"/>
</dbReference>
<dbReference type="GO" id="GO:0019544">
    <property type="term" value="P:arginine catabolic process to glutamate"/>
    <property type="evidence" value="ECO:0007669"/>
    <property type="project" value="UniProtKB-UniRule"/>
</dbReference>
<dbReference type="GO" id="GO:0019545">
    <property type="term" value="P:arginine catabolic process to succinate"/>
    <property type="evidence" value="ECO:0007669"/>
    <property type="project" value="UniProtKB-UniRule"/>
</dbReference>
<dbReference type="Gene3D" id="3.75.10.20">
    <property type="entry name" value="Succinylarginine dihydrolase"/>
    <property type="match status" value="1"/>
</dbReference>
<dbReference type="HAMAP" id="MF_01172">
    <property type="entry name" value="AstB"/>
    <property type="match status" value="1"/>
</dbReference>
<dbReference type="InterPro" id="IPR037031">
    <property type="entry name" value="AstB_sf"/>
</dbReference>
<dbReference type="InterPro" id="IPR007079">
    <property type="entry name" value="SuccinylArg_d-Hdrlase_AstB"/>
</dbReference>
<dbReference type="NCBIfam" id="TIGR03241">
    <property type="entry name" value="arg_catab_astB"/>
    <property type="match status" value="1"/>
</dbReference>
<dbReference type="NCBIfam" id="NF009789">
    <property type="entry name" value="PRK13281.1"/>
    <property type="match status" value="1"/>
</dbReference>
<dbReference type="PANTHER" id="PTHR30420">
    <property type="entry name" value="N-SUCCINYLARGININE DIHYDROLASE"/>
    <property type="match status" value="1"/>
</dbReference>
<dbReference type="PANTHER" id="PTHR30420:SF2">
    <property type="entry name" value="N-SUCCINYLARGININE DIHYDROLASE"/>
    <property type="match status" value="1"/>
</dbReference>
<dbReference type="Pfam" id="PF04996">
    <property type="entry name" value="AstB"/>
    <property type="match status" value="1"/>
</dbReference>
<dbReference type="SUPFAM" id="SSF55909">
    <property type="entry name" value="Pentein"/>
    <property type="match status" value="1"/>
</dbReference>
<evidence type="ECO:0000255" key="1">
    <source>
        <dbReference type="HAMAP-Rule" id="MF_01172"/>
    </source>
</evidence>
<reference key="1">
    <citation type="journal article" date="2011" name="Appl. Environ. Microbiol.">
        <title>Genomic potential of Marinobacter aquaeolei, a biogeochemical 'opportunitroph'.</title>
        <authorList>
            <person name="Singer E."/>
            <person name="Webb E.A."/>
            <person name="Nelson W.C."/>
            <person name="Heidelberg J.F."/>
            <person name="Ivanova N."/>
            <person name="Pati A."/>
            <person name="Edwards K.J."/>
        </authorList>
    </citation>
    <scope>NUCLEOTIDE SEQUENCE [LARGE SCALE GENOMIC DNA]</scope>
    <source>
        <strain>ATCC 700491 / DSM 11845 / VT8</strain>
    </source>
</reference>